<organism>
    <name type="scientific">Aspergillus fumigatus (strain ATCC MYA-4609 / CBS 101355 / FGSC A1100 / Af293)</name>
    <name type="common">Neosartorya fumigata</name>
    <dbReference type="NCBI Taxonomy" id="330879"/>
    <lineage>
        <taxon>Eukaryota</taxon>
        <taxon>Fungi</taxon>
        <taxon>Dikarya</taxon>
        <taxon>Ascomycota</taxon>
        <taxon>Pezizomycotina</taxon>
        <taxon>Eurotiomycetes</taxon>
        <taxon>Eurotiomycetidae</taxon>
        <taxon>Eurotiales</taxon>
        <taxon>Aspergillaceae</taxon>
        <taxon>Aspergillus</taxon>
        <taxon>Aspergillus subgen. Fumigati</taxon>
    </lineage>
</organism>
<protein>
    <recommendedName>
        <fullName>Tyrosinase</fullName>
        <ecNumber>1.14.18.1</ecNumber>
    </recommendedName>
    <alternativeName>
        <fullName>Monophenol monooxygenase</fullName>
    </alternativeName>
</protein>
<gene>
    <name type="primary">tyr1</name>
    <name type="ORF">AFUA_1G17430</name>
</gene>
<feature type="chain" id="PRO_0000186732" description="Tyrosinase">
    <location>
        <begin position="1"/>
        <end position="630"/>
    </location>
</feature>
<feature type="binding site" evidence="2">
    <location>
        <position position="69"/>
    </location>
    <ligand>
        <name>Cu cation</name>
        <dbReference type="ChEBI" id="CHEBI:23378"/>
        <label>A</label>
    </ligand>
</feature>
<feature type="binding site" evidence="2">
    <location>
        <position position="92"/>
    </location>
    <ligand>
        <name>Cu cation</name>
        <dbReference type="ChEBI" id="CHEBI:23378"/>
        <label>A</label>
    </ligand>
</feature>
<feature type="binding site" evidence="2">
    <location>
        <position position="101"/>
    </location>
    <ligand>
        <name>Cu cation</name>
        <dbReference type="ChEBI" id="CHEBI:23378"/>
        <label>A</label>
    </ligand>
</feature>
<feature type="binding site" evidence="2">
    <location>
        <position position="317"/>
    </location>
    <ligand>
        <name>Cu cation</name>
        <dbReference type="ChEBI" id="CHEBI:23378"/>
        <label>B</label>
    </ligand>
</feature>
<feature type="binding site" evidence="2">
    <location>
        <position position="321"/>
    </location>
    <ligand>
        <name>Cu cation</name>
        <dbReference type="ChEBI" id="CHEBI:23378"/>
        <label>B</label>
    </ligand>
</feature>
<feature type="binding site" evidence="2">
    <location>
        <position position="360"/>
    </location>
    <ligand>
        <name>Cu cation</name>
        <dbReference type="ChEBI" id="CHEBI:23378"/>
        <label>B</label>
    </ligand>
</feature>
<feature type="cross-link" description="2'-(S-cysteinyl)-histidine (Cys-His)" evidence="2">
    <location>
        <begin position="90"/>
        <end position="92"/>
    </location>
</feature>
<feature type="sequence conflict" description="In Ref. 2; EAL91072." evidence="3" ref="2">
    <location>
        <begin position="322"/>
        <end position="335"/>
    </location>
</feature>
<feature type="sequence conflict" description="In Ref. 1; CAC82195." evidence="3" ref="1">
    <original>E</original>
    <variation>D</variation>
    <location>
        <position position="600"/>
    </location>
</feature>
<name>TYRO_ASPFU</name>
<accession>Q8J130</accession>
<accession>Q4WR60</accession>
<reference key="1">
    <citation type="submission" date="2000-08" db="EMBL/GenBank/DDBJ databases">
        <title>Cloning of a tyrosinase gene of the human pathogenic fungus Aspergillus fumigatus.</title>
        <authorList>
            <person name="Langfelder K."/>
            <person name="Glaser P."/>
            <person name="Brakhage A.A."/>
        </authorList>
    </citation>
    <scope>NUCLEOTIDE SEQUENCE [GENOMIC DNA]</scope>
    <source>
        <strain>ATCC 46645 / NCPF 2109</strain>
    </source>
</reference>
<reference key="2">
    <citation type="journal article" date="2005" name="Nature">
        <title>Genomic sequence of the pathogenic and allergenic filamentous fungus Aspergillus fumigatus.</title>
        <authorList>
            <person name="Nierman W.C."/>
            <person name="Pain A."/>
            <person name="Anderson M.J."/>
            <person name="Wortman J.R."/>
            <person name="Kim H.S."/>
            <person name="Arroyo J."/>
            <person name="Berriman M."/>
            <person name="Abe K."/>
            <person name="Archer D.B."/>
            <person name="Bermejo C."/>
            <person name="Bennett J.W."/>
            <person name="Bowyer P."/>
            <person name="Chen D."/>
            <person name="Collins M."/>
            <person name="Coulsen R."/>
            <person name="Davies R."/>
            <person name="Dyer P.S."/>
            <person name="Farman M.L."/>
            <person name="Fedorova N."/>
            <person name="Fedorova N.D."/>
            <person name="Feldblyum T.V."/>
            <person name="Fischer R."/>
            <person name="Fosker N."/>
            <person name="Fraser A."/>
            <person name="Garcia J.L."/>
            <person name="Garcia M.J."/>
            <person name="Goble A."/>
            <person name="Goldman G.H."/>
            <person name="Gomi K."/>
            <person name="Griffith-Jones S."/>
            <person name="Gwilliam R."/>
            <person name="Haas B.J."/>
            <person name="Haas H."/>
            <person name="Harris D.E."/>
            <person name="Horiuchi H."/>
            <person name="Huang J."/>
            <person name="Humphray S."/>
            <person name="Jimenez J."/>
            <person name="Keller N."/>
            <person name="Khouri H."/>
            <person name="Kitamoto K."/>
            <person name="Kobayashi T."/>
            <person name="Konzack S."/>
            <person name="Kulkarni R."/>
            <person name="Kumagai T."/>
            <person name="Lafton A."/>
            <person name="Latge J.-P."/>
            <person name="Li W."/>
            <person name="Lord A."/>
            <person name="Lu C."/>
            <person name="Majoros W.H."/>
            <person name="May G.S."/>
            <person name="Miller B.L."/>
            <person name="Mohamoud Y."/>
            <person name="Molina M."/>
            <person name="Monod M."/>
            <person name="Mouyna I."/>
            <person name="Mulligan S."/>
            <person name="Murphy L.D."/>
            <person name="O'Neil S."/>
            <person name="Paulsen I."/>
            <person name="Penalva M.A."/>
            <person name="Pertea M."/>
            <person name="Price C."/>
            <person name="Pritchard B.L."/>
            <person name="Quail M.A."/>
            <person name="Rabbinowitsch E."/>
            <person name="Rawlins N."/>
            <person name="Rajandream M.A."/>
            <person name="Reichard U."/>
            <person name="Renauld H."/>
            <person name="Robson G.D."/>
            <person name="Rodriguez de Cordoba S."/>
            <person name="Rodriguez-Pena J.M."/>
            <person name="Ronning C.M."/>
            <person name="Rutter S."/>
            <person name="Salzberg S.L."/>
            <person name="Sanchez M."/>
            <person name="Sanchez-Ferrero J.C."/>
            <person name="Saunders D."/>
            <person name="Seeger K."/>
            <person name="Squares R."/>
            <person name="Squares S."/>
            <person name="Takeuchi M."/>
            <person name="Tekaia F."/>
            <person name="Turner G."/>
            <person name="Vazquez de Aldana C.R."/>
            <person name="Weidman J."/>
            <person name="White O."/>
            <person name="Woodward J.R."/>
            <person name="Yu J.-H."/>
            <person name="Fraser C.M."/>
            <person name="Galagan J.E."/>
            <person name="Asai K."/>
            <person name="Machida M."/>
            <person name="Hall N."/>
            <person name="Barrell B.G."/>
            <person name="Denning D.W."/>
        </authorList>
    </citation>
    <scope>NUCLEOTIDE SEQUENCE [LARGE SCALE GENOMIC DNA]</scope>
    <source>
        <strain>ATCC MYA-4609 / CBS 101355 / FGSC A1100 / Af293</strain>
    </source>
</reference>
<proteinExistence type="inferred from homology"/>
<comment type="function">
    <text evidence="1">This is a copper-containing oxidase that functions in the formation of pigments such as melanins and other polyphenolic compounds.</text>
</comment>
<comment type="catalytic activity">
    <reaction>
        <text>2 L-dopa + O2 = 2 L-dopaquinone + 2 H2O</text>
        <dbReference type="Rhea" id="RHEA:34287"/>
        <dbReference type="ChEBI" id="CHEBI:15377"/>
        <dbReference type="ChEBI" id="CHEBI:15379"/>
        <dbReference type="ChEBI" id="CHEBI:57504"/>
        <dbReference type="ChEBI" id="CHEBI:57924"/>
        <dbReference type="EC" id="1.14.18.1"/>
    </reaction>
</comment>
<comment type="catalytic activity">
    <reaction>
        <text>L-tyrosine + O2 = L-dopaquinone + H2O</text>
        <dbReference type="Rhea" id="RHEA:18117"/>
        <dbReference type="ChEBI" id="CHEBI:15377"/>
        <dbReference type="ChEBI" id="CHEBI:15379"/>
        <dbReference type="ChEBI" id="CHEBI:57924"/>
        <dbReference type="ChEBI" id="CHEBI:58315"/>
        <dbReference type="EC" id="1.14.18.1"/>
    </reaction>
</comment>
<comment type="cofactor">
    <cofactor evidence="2">
        <name>Cu(2+)</name>
        <dbReference type="ChEBI" id="CHEBI:29036"/>
    </cofactor>
    <text evidence="2">Binds 2 copper ions per subunit.</text>
</comment>
<comment type="similarity">
    <text evidence="3">Belongs to the tyrosinase family.</text>
</comment>
<evidence type="ECO:0000250" key="1"/>
<evidence type="ECO:0000250" key="2">
    <source>
        <dbReference type="UniProtKB" id="Q9ZP19"/>
    </source>
</evidence>
<evidence type="ECO:0000305" key="3"/>
<keyword id="KW-0186">Copper</keyword>
<keyword id="KW-0470">Melanin biosynthesis</keyword>
<keyword id="KW-0479">Metal-binding</keyword>
<keyword id="KW-0503">Monooxygenase</keyword>
<keyword id="KW-0560">Oxidoreductase</keyword>
<keyword id="KW-1185">Reference proteome</keyword>
<keyword id="KW-0883">Thioether bond</keyword>
<sequence length="630" mass="73032">MSSNKPYVIKGIPVDAGQIIPVRRDIDEWYEDTSRQSRIQLSIFIWALREFQSIDYKDRLSYFQIAGIHHFPLITWDEEEPPVPNKPGYCVHNNVTFPTWHRPYMLLFEQRLFEIMETTIKETVPESHKQEWRDAARQWRLPYWDFAKTSGPHATGPLSLPVLCGLANVVILNPANPETPIELPNPVYKYRAPDLMGNLDKPFHIPPERIDPDKDDYYPWDKCQATTKYGLLKNNPHIQDAGQDVTKSNLALNEHPWYRPNKAGFPPLQTLTYEVHRLLSFKFSSWGAFASTKWCNEENKPPASQQTRDILSLEYIHNNVHNWVGGTDYLGDPSKPDLQGAGHMSSVPVAAFDPIFWLYHNNVDRLTAIWQVLNQDHWFDEPHPSDAKPDDPLKPFHVSKDKYFTSDDARFWRKYGYDYDIVKKPGTNEDRAPEEVKMKINQLYGEPISRLHEGQPVEYDYVINVIYDRYALDGIPYTIVFYLHLKDGSYKCLGGVYTFSTKLSDAQDTERGGCDNCREQKKAGVLASAQIPLTYTLYERQEWHNLGKLLPVKETADIIRQHLCWKVVGVNNSILFDSEQPMRGDPATWRSLDVTAAYSEIHYPVDRNYKYIDRGLPAYHNYLPIHLSPT</sequence>
<dbReference type="EC" id="1.14.18.1"/>
<dbReference type="EMBL" id="AJ293806">
    <property type="protein sequence ID" value="CAC82195.1"/>
    <property type="molecule type" value="Genomic_DNA"/>
</dbReference>
<dbReference type="EMBL" id="AAHF01000004">
    <property type="protein sequence ID" value="EAL91072.1"/>
    <property type="molecule type" value="Genomic_DNA"/>
</dbReference>
<dbReference type="RefSeq" id="XP_753110.1">
    <property type="nucleotide sequence ID" value="XM_748017.1"/>
</dbReference>
<dbReference type="SMR" id="Q8J130"/>
<dbReference type="STRING" id="330879.Q8J130"/>
<dbReference type="GeneID" id="3510142"/>
<dbReference type="KEGG" id="afm:AFUA_1G17430"/>
<dbReference type="VEuPathDB" id="FungiDB:Afu1g17430"/>
<dbReference type="eggNOG" id="ENOG502RYJI">
    <property type="taxonomic scope" value="Eukaryota"/>
</dbReference>
<dbReference type="HOGENOM" id="CLU_013691_1_2_1"/>
<dbReference type="InParanoid" id="Q8J130"/>
<dbReference type="OrthoDB" id="1658288at2759"/>
<dbReference type="Proteomes" id="UP000002530">
    <property type="component" value="Chromosome 1"/>
</dbReference>
<dbReference type="GO" id="GO:0046872">
    <property type="term" value="F:metal ion binding"/>
    <property type="evidence" value="ECO:0007669"/>
    <property type="project" value="UniProtKB-KW"/>
</dbReference>
<dbReference type="GO" id="GO:0004503">
    <property type="term" value="F:tyrosinase activity"/>
    <property type="evidence" value="ECO:0007669"/>
    <property type="project" value="UniProtKB-EC"/>
</dbReference>
<dbReference type="GO" id="GO:0042438">
    <property type="term" value="P:melanin biosynthetic process"/>
    <property type="evidence" value="ECO:0007669"/>
    <property type="project" value="UniProtKB-KW"/>
</dbReference>
<dbReference type="Gene3D" id="2.60.310.20">
    <property type="match status" value="1"/>
</dbReference>
<dbReference type="Gene3D" id="1.10.1280.10">
    <property type="entry name" value="Di-copper center containing domain from catechol oxidase"/>
    <property type="match status" value="1"/>
</dbReference>
<dbReference type="InterPro" id="IPR008922">
    <property type="entry name" value="Di-copper_centre_dom_sf"/>
</dbReference>
<dbReference type="InterPro" id="IPR016216">
    <property type="entry name" value="Monophenol_mOase_fun"/>
</dbReference>
<dbReference type="InterPro" id="IPR050316">
    <property type="entry name" value="Tyrosinase/Hemocyanin"/>
</dbReference>
<dbReference type="InterPro" id="IPR041640">
    <property type="entry name" value="Tyrosinase_C"/>
</dbReference>
<dbReference type="InterPro" id="IPR002227">
    <property type="entry name" value="Tyrosinase_Cu-bd"/>
</dbReference>
<dbReference type="PANTHER" id="PTHR11474:SF76">
    <property type="entry name" value="SHKT DOMAIN-CONTAINING PROTEIN"/>
    <property type="match status" value="1"/>
</dbReference>
<dbReference type="PANTHER" id="PTHR11474">
    <property type="entry name" value="TYROSINASE FAMILY MEMBER"/>
    <property type="match status" value="1"/>
</dbReference>
<dbReference type="Pfam" id="PF00264">
    <property type="entry name" value="Tyrosinase"/>
    <property type="match status" value="1"/>
</dbReference>
<dbReference type="Pfam" id="PF18132">
    <property type="entry name" value="Tyrosinase_C"/>
    <property type="match status" value="1"/>
</dbReference>
<dbReference type="PIRSF" id="PIRSF000340">
    <property type="entry name" value="MPO_fungal"/>
    <property type="match status" value="1"/>
</dbReference>
<dbReference type="PRINTS" id="PR00092">
    <property type="entry name" value="TYROSINASE"/>
</dbReference>
<dbReference type="SUPFAM" id="SSF48056">
    <property type="entry name" value="Di-copper centre-containing domain"/>
    <property type="match status" value="1"/>
</dbReference>
<dbReference type="PROSITE" id="PS00497">
    <property type="entry name" value="TYROSINASE_1"/>
    <property type="match status" value="1"/>
</dbReference>
<dbReference type="PROSITE" id="PS00498">
    <property type="entry name" value="TYROSINASE_2"/>
    <property type="match status" value="1"/>
</dbReference>